<organism>
    <name type="scientific">Oryza sativa subsp. japonica</name>
    <name type="common">Rice</name>
    <dbReference type="NCBI Taxonomy" id="39947"/>
    <lineage>
        <taxon>Eukaryota</taxon>
        <taxon>Viridiplantae</taxon>
        <taxon>Streptophyta</taxon>
        <taxon>Embryophyta</taxon>
        <taxon>Tracheophyta</taxon>
        <taxon>Spermatophyta</taxon>
        <taxon>Magnoliopsida</taxon>
        <taxon>Liliopsida</taxon>
        <taxon>Poales</taxon>
        <taxon>Poaceae</taxon>
        <taxon>BOP clade</taxon>
        <taxon>Oryzoideae</taxon>
        <taxon>Oryzeae</taxon>
        <taxon>Oryzinae</taxon>
        <taxon>Oryza</taxon>
        <taxon>Oryza sativa</taxon>
    </lineage>
</organism>
<evidence type="ECO:0000250" key="1">
    <source>
        <dbReference type="UniProtKB" id="Q65XA0"/>
    </source>
</evidence>
<evidence type="ECO:0000250" key="2">
    <source>
        <dbReference type="UniProtKB" id="Q9FWR4"/>
    </source>
</evidence>
<evidence type="ECO:0000255" key="3"/>
<evidence type="ECO:0000255" key="4">
    <source>
        <dbReference type="PROSITE-ProRule" id="PRU00684"/>
    </source>
</evidence>
<evidence type="ECO:0000255" key="5">
    <source>
        <dbReference type="PROSITE-ProRule" id="PRU00685"/>
    </source>
</evidence>
<evidence type="ECO:0000269" key="6">
    <source>
    </source>
</evidence>
<evidence type="ECO:0000303" key="7">
    <source>
    </source>
</evidence>
<evidence type="ECO:0000305" key="8"/>
<evidence type="ECO:0000312" key="9">
    <source>
        <dbReference type="EMBL" id="BAD38160.1"/>
    </source>
</evidence>
<evidence type="ECO:0000312" key="10">
    <source>
        <dbReference type="EMBL" id="BAF19142.1"/>
    </source>
</evidence>
<evidence type="ECO:0000312" key="11">
    <source>
        <dbReference type="EMBL" id="EEE65386.1"/>
    </source>
</evidence>
<gene>
    <name evidence="7" type="primary">DHAR2</name>
    <name evidence="10" type="ordered locus">Os06g0232600</name>
    <name evidence="8" type="ordered locus">LOC_Os06g12630</name>
    <name evidence="11" type="ORF">OsJ_20706</name>
    <name evidence="9" type="ORF">P0479H10.23</name>
</gene>
<protein>
    <recommendedName>
        <fullName evidence="8">Probable glutathione S-transferase DHAR2, chloroplastic</fullName>
        <ecNumber evidence="8">2.5.1.18</ecNumber>
    </recommendedName>
    <alternativeName>
        <fullName evidence="8">GSH-dependent dehydroascorbate reductase 2</fullName>
        <shortName evidence="7">OsDHAR2</shortName>
        <ecNumber evidence="8">1.8.5.1</ecNumber>
    </alternativeName>
    <alternativeName>
        <fullName evidence="8">Glutathione-dependent dehydroascorbate reductase 2</fullName>
    </alternativeName>
</protein>
<reference key="1">
    <citation type="journal article" date="2005" name="Nature">
        <title>The map-based sequence of the rice genome.</title>
        <authorList>
            <consortium name="International rice genome sequencing project (IRGSP)"/>
        </authorList>
    </citation>
    <scope>NUCLEOTIDE SEQUENCE [LARGE SCALE GENOMIC DNA]</scope>
    <source>
        <strain>cv. Nipponbare</strain>
    </source>
</reference>
<reference key="2">
    <citation type="journal article" date="2008" name="Nucleic Acids Res.">
        <title>The rice annotation project database (RAP-DB): 2008 update.</title>
        <authorList>
            <consortium name="The rice annotation project (RAP)"/>
        </authorList>
    </citation>
    <scope>GENOME REANNOTATION</scope>
    <source>
        <strain>cv. Nipponbare</strain>
    </source>
</reference>
<reference key="3">
    <citation type="journal article" date="2013" name="Rice">
        <title>Improvement of the Oryza sativa Nipponbare reference genome using next generation sequence and optical map data.</title>
        <authorList>
            <person name="Kawahara Y."/>
            <person name="de la Bastide M."/>
            <person name="Hamilton J.P."/>
            <person name="Kanamori H."/>
            <person name="McCombie W.R."/>
            <person name="Ouyang S."/>
            <person name="Schwartz D.C."/>
            <person name="Tanaka T."/>
            <person name="Wu J."/>
            <person name="Zhou S."/>
            <person name="Childs K.L."/>
            <person name="Davidson R.M."/>
            <person name="Lin H."/>
            <person name="Quesada-Ocampo L."/>
            <person name="Vaillancourt B."/>
            <person name="Sakai H."/>
            <person name="Lee S.S."/>
            <person name="Kim J."/>
            <person name="Numa H."/>
            <person name="Itoh T."/>
            <person name="Buell C.R."/>
            <person name="Matsumoto T."/>
        </authorList>
    </citation>
    <scope>GENOME REANNOTATION</scope>
    <source>
        <strain>cv. Nipponbare</strain>
    </source>
</reference>
<reference key="4">
    <citation type="journal article" date="2005" name="PLoS Biol.">
        <title>The genomes of Oryza sativa: a history of duplications.</title>
        <authorList>
            <person name="Yu J."/>
            <person name="Wang J."/>
            <person name="Lin W."/>
            <person name="Li S."/>
            <person name="Li H."/>
            <person name="Zhou J."/>
            <person name="Ni P."/>
            <person name="Dong W."/>
            <person name="Hu S."/>
            <person name="Zeng C."/>
            <person name="Zhang J."/>
            <person name="Zhang Y."/>
            <person name="Li R."/>
            <person name="Xu Z."/>
            <person name="Li S."/>
            <person name="Li X."/>
            <person name="Zheng H."/>
            <person name="Cong L."/>
            <person name="Lin L."/>
            <person name="Yin J."/>
            <person name="Geng J."/>
            <person name="Li G."/>
            <person name="Shi J."/>
            <person name="Liu J."/>
            <person name="Lv H."/>
            <person name="Li J."/>
            <person name="Wang J."/>
            <person name="Deng Y."/>
            <person name="Ran L."/>
            <person name="Shi X."/>
            <person name="Wang X."/>
            <person name="Wu Q."/>
            <person name="Li C."/>
            <person name="Ren X."/>
            <person name="Wang J."/>
            <person name="Wang X."/>
            <person name="Li D."/>
            <person name="Liu D."/>
            <person name="Zhang X."/>
            <person name="Ji Z."/>
            <person name="Zhao W."/>
            <person name="Sun Y."/>
            <person name="Zhang Z."/>
            <person name="Bao J."/>
            <person name="Han Y."/>
            <person name="Dong L."/>
            <person name="Ji J."/>
            <person name="Chen P."/>
            <person name="Wu S."/>
            <person name="Liu J."/>
            <person name="Xiao Y."/>
            <person name="Bu D."/>
            <person name="Tan J."/>
            <person name="Yang L."/>
            <person name="Ye C."/>
            <person name="Zhang J."/>
            <person name="Xu J."/>
            <person name="Zhou Y."/>
            <person name="Yu Y."/>
            <person name="Zhang B."/>
            <person name="Zhuang S."/>
            <person name="Wei H."/>
            <person name="Liu B."/>
            <person name="Lei M."/>
            <person name="Yu H."/>
            <person name="Li Y."/>
            <person name="Xu H."/>
            <person name="Wei S."/>
            <person name="He X."/>
            <person name="Fang L."/>
            <person name="Zhang Z."/>
            <person name="Zhang Y."/>
            <person name="Huang X."/>
            <person name="Su Z."/>
            <person name="Tong W."/>
            <person name="Li J."/>
            <person name="Tong Z."/>
            <person name="Li S."/>
            <person name="Ye J."/>
            <person name="Wang L."/>
            <person name="Fang L."/>
            <person name="Lei T."/>
            <person name="Chen C.-S."/>
            <person name="Chen H.-C."/>
            <person name="Xu Z."/>
            <person name="Li H."/>
            <person name="Huang H."/>
            <person name="Zhang F."/>
            <person name="Xu H."/>
            <person name="Li N."/>
            <person name="Zhao C."/>
            <person name="Li S."/>
            <person name="Dong L."/>
            <person name="Huang Y."/>
            <person name="Li L."/>
            <person name="Xi Y."/>
            <person name="Qi Q."/>
            <person name="Li W."/>
            <person name="Zhang B."/>
            <person name="Hu W."/>
            <person name="Zhang Y."/>
            <person name="Tian X."/>
            <person name="Jiao Y."/>
            <person name="Liang X."/>
            <person name="Jin J."/>
            <person name="Gao L."/>
            <person name="Zheng W."/>
            <person name="Hao B."/>
            <person name="Liu S.-M."/>
            <person name="Wang W."/>
            <person name="Yuan L."/>
            <person name="Cao M."/>
            <person name="McDermott J."/>
            <person name="Samudrala R."/>
            <person name="Wang J."/>
            <person name="Wong G.K.-S."/>
            <person name="Yang H."/>
        </authorList>
    </citation>
    <scope>NUCLEOTIDE SEQUENCE [LARGE SCALE GENOMIC DNA]</scope>
    <source>
        <strain>cv. Nipponbare</strain>
    </source>
</reference>
<reference key="5">
    <citation type="journal article" date="2003" name="Science">
        <title>Collection, mapping, and annotation of over 28,000 cDNA clones from japonica rice.</title>
        <authorList>
            <consortium name="The rice full-length cDNA consortium"/>
        </authorList>
    </citation>
    <scope>NUCLEOTIDE SEQUENCE [LARGE SCALE MRNA]</scope>
    <source>
        <strain>cv. Nipponbare</strain>
    </source>
</reference>
<reference key="6">
    <citation type="journal article" date="2010" name="BMC Genomics">
        <title>Comprehensive expression analysis suggests overlapping and specific roles of rice glutathione S-transferase genes during development and stress responses.</title>
        <authorList>
            <person name="Jain M."/>
            <person name="Ghanashyam C."/>
            <person name="Bhattacharjee A."/>
        </authorList>
    </citation>
    <scope>GENE FAMILY</scope>
    <scope>NOMENCLATURE</scope>
</reference>
<reference key="7">
    <citation type="journal article" date="2015" name="J. Plant Physiol.">
        <title>Transcriptional profile of genes involved in ascorbate glutathione cycle in senescing leaves for an early senescence leaf (esl) rice mutant.</title>
        <authorList>
            <person name="Li Z."/>
            <person name="Su D."/>
            <person name="Lei B."/>
            <person name="Wang F."/>
            <person name="Geng W."/>
            <person name="Pan G."/>
            <person name="Cheng F."/>
        </authorList>
    </citation>
    <scope>INDUCTION</scope>
</reference>
<accession>Q67UK9</accession>
<accession>B9FSC5</accession>
<comment type="function">
    <text evidence="1">Involved in ascorbate homeostasis. Maintains redox pools of ascorbate by recycling dihydroascorbate (DHA) to ascorbate. Involved in scavenging reactive oxygen species (ROS) under oxidative stresses.</text>
</comment>
<comment type="catalytic activity">
    <reaction evidence="8">
        <text>RX + glutathione = an S-substituted glutathione + a halide anion + H(+)</text>
        <dbReference type="Rhea" id="RHEA:16437"/>
        <dbReference type="ChEBI" id="CHEBI:15378"/>
        <dbReference type="ChEBI" id="CHEBI:16042"/>
        <dbReference type="ChEBI" id="CHEBI:17792"/>
        <dbReference type="ChEBI" id="CHEBI:57925"/>
        <dbReference type="ChEBI" id="CHEBI:90779"/>
        <dbReference type="EC" id="2.5.1.18"/>
    </reaction>
</comment>
<comment type="catalytic activity">
    <reaction evidence="8">
        <text>L-dehydroascorbate + 2 glutathione = glutathione disulfide + L-ascorbate</text>
        <dbReference type="Rhea" id="RHEA:24424"/>
        <dbReference type="ChEBI" id="CHEBI:38290"/>
        <dbReference type="ChEBI" id="CHEBI:57925"/>
        <dbReference type="ChEBI" id="CHEBI:58297"/>
        <dbReference type="ChEBI" id="CHEBI:58539"/>
        <dbReference type="EC" id="1.8.5.1"/>
    </reaction>
</comment>
<comment type="subunit">
    <text evidence="1">Monomer.</text>
</comment>
<comment type="subcellular location">
    <subcellularLocation>
        <location evidence="3">Plastid</location>
        <location evidence="3">Chloroplast</location>
    </subcellularLocation>
</comment>
<comment type="induction">
    <text evidence="6">Down-regulated during senescence.</text>
</comment>
<comment type="similarity">
    <text evidence="8">Belongs to the GST superfamily. DHAR family.</text>
</comment>
<dbReference type="EC" id="2.5.1.18" evidence="8"/>
<dbReference type="EC" id="1.8.5.1" evidence="8"/>
<dbReference type="EMBL" id="AP005522">
    <property type="protein sequence ID" value="BAD38160.1"/>
    <property type="molecule type" value="Genomic_DNA"/>
</dbReference>
<dbReference type="EMBL" id="AP008212">
    <property type="protein sequence ID" value="BAF19142.1"/>
    <property type="molecule type" value="Genomic_DNA"/>
</dbReference>
<dbReference type="EMBL" id="AK106013">
    <property type="protein sequence ID" value="BAG97507.1"/>
    <property type="molecule type" value="mRNA"/>
</dbReference>
<dbReference type="EMBL" id="AP014962">
    <property type="protein sequence ID" value="BAS96927.1"/>
    <property type="molecule type" value="Genomic_DNA"/>
</dbReference>
<dbReference type="EMBL" id="CM000143">
    <property type="protein sequence ID" value="EEE65386.1"/>
    <property type="molecule type" value="Genomic_DNA"/>
</dbReference>
<dbReference type="SMR" id="Q67UK9"/>
<dbReference type="FunCoup" id="Q67UK9">
    <property type="interactions" value="1948"/>
</dbReference>
<dbReference type="STRING" id="39947.Q67UK9"/>
<dbReference type="PaxDb" id="39947-Q67UK9"/>
<dbReference type="EnsemblPlants" id="Os06t0232600-01">
    <property type="protein sequence ID" value="Os06t0232600-01"/>
    <property type="gene ID" value="Os06g0232600"/>
</dbReference>
<dbReference type="Gramene" id="Os06t0232600-01">
    <property type="protein sequence ID" value="Os06t0232600-01"/>
    <property type="gene ID" value="Os06g0232600"/>
</dbReference>
<dbReference type="KEGG" id="dosa:Os06g0232600"/>
<dbReference type="KEGG" id="osa:4340581"/>
<dbReference type="eggNOG" id="KOG1422">
    <property type="taxonomic scope" value="Eukaryota"/>
</dbReference>
<dbReference type="HOGENOM" id="CLU_011226_1_0_1"/>
<dbReference type="InParanoid" id="Q67UK9"/>
<dbReference type="OMA" id="SYMKAIF"/>
<dbReference type="OrthoDB" id="1935530at2759"/>
<dbReference type="Proteomes" id="UP000000763">
    <property type="component" value="Chromosome 6"/>
</dbReference>
<dbReference type="Proteomes" id="UP000007752">
    <property type="component" value="Chromosome 6"/>
</dbReference>
<dbReference type="Proteomes" id="UP000059680">
    <property type="component" value="Chromosome 6"/>
</dbReference>
<dbReference type="GO" id="GO:0009507">
    <property type="term" value="C:chloroplast"/>
    <property type="evidence" value="ECO:0007669"/>
    <property type="project" value="UniProtKB-SubCell"/>
</dbReference>
<dbReference type="GO" id="GO:0045174">
    <property type="term" value="F:glutathione dehydrogenase (ascorbate) activity"/>
    <property type="evidence" value="ECO:0000318"/>
    <property type="project" value="GO_Central"/>
</dbReference>
<dbReference type="GO" id="GO:0004364">
    <property type="term" value="F:glutathione transferase activity"/>
    <property type="evidence" value="ECO:0007669"/>
    <property type="project" value="UniProtKB-EC"/>
</dbReference>
<dbReference type="GO" id="GO:0140547">
    <property type="term" value="P:acquisition of seed longevity"/>
    <property type="evidence" value="ECO:0007669"/>
    <property type="project" value="EnsemblPlants"/>
</dbReference>
<dbReference type="GO" id="GO:0033355">
    <property type="term" value="P:ascorbate glutathione cycle"/>
    <property type="evidence" value="ECO:0000318"/>
    <property type="project" value="GO_Central"/>
</dbReference>
<dbReference type="CDD" id="cd03201">
    <property type="entry name" value="GST_C_DHAR"/>
    <property type="match status" value="1"/>
</dbReference>
<dbReference type="CDD" id="cd00570">
    <property type="entry name" value="GST_N_family"/>
    <property type="match status" value="1"/>
</dbReference>
<dbReference type="FunFam" id="3.40.30.10:FF:000102">
    <property type="entry name" value="Glutathione S-transferase DHAR3 chloroplastic"/>
    <property type="match status" value="1"/>
</dbReference>
<dbReference type="FunFam" id="1.20.1050.10:FF:000029">
    <property type="entry name" value="Glutathione S-transferase DHAR3, chloroplastic"/>
    <property type="match status" value="1"/>
</dbReference>
<dbReference type="Gene3D" id="1.20.1050.10">
    <property type="match status" value="1"/>
</dbReference>
<dbReference type="Gene3D" id="3.40.30.10">
    <property type="entry name" value="Glutaredoxin"/>
    <property type="match status" value="1"/>
</dbReference>
<dbReference type="InterPro" id="IPR044627">
    <property type="entry name" value="DHAR1/2/3/4"/>
</dbReference>
<dbReference type="InterPro" id="IPR010987">
    <property type="entry name" value="Glutathione-S-Trfase_C-like"/>
</dbReference>
<dbReference type="InterPro" id="IPR036282">
    <property type="entry name" value="Glutathione-S-Trfase_C_sf"/>
</dbReference>
<dbReference type="InterPro" id="IPR040079">
    <property type="entry name" value="Glutathione_S-Trfase"/>
</dbReference>
<dbReference type="InterPro" id="IPR004045">
    <property type="entry name" value="Glutathione_S-Trfase_N"/>
</dbReference>
<dbReference type="InterPro" id="IPR036249">
    <property type="entry name" value="Thioredoxin-like_sf"/>
</dbReference>
<dbReference type="PANTHER" id="PTHR44420">
    <property type="entry name" value="GLUTATHIONE S-TRANSFERASE DHAR2-RELATED"/>
    <property type="match status" value="1"/>
</dbReference>
<dbReference type="PANTHER" id="PTHR44420:SF1">
    <property type="entry name" value="GLUTATHIONE S-TRANSFERASE DHAR3, CHLOROPLASTIC"/>
    <property type="match status" value="1"/>
</dbReference>
<dbReference type="Pfam" id="PF13410">
    <property type="entry name" value="GST_C_2"/>
    <property type="match status" value="1"/>
</dbReference>
<dbReference type="Pfam" id="PF13409">
    <property type="entry name" value="GST_N_2"/>
    <property type="match status" value="1"/>
</dbReference>
<dbReference type="SFLD" id="SFLDS00019">
    <property type="entry name" value="Glutathione_Transferase_(cytos"/>
    <property type="match status" value="1"/>
</dbReference>
<dbReference type="SFLD" id="SFLDG00358">
    <property type="entry name" value="Main_(cytGST)"/>
    <property type="match status" value="1"/>
</dbReference>
<dbReference type="SUPFAM" id="SSF47616">
    <property type="entry name" value="GST C-terminal domain-like"/>
    <property type="match status" value="1"/>
</dbReference>
<dbReference type="SUPFAM" id="SSF52833">
    <property type="entry name" value="Thioredoxin-like"/>
    <property type="match status" value="1"/>
</dbReference>
<dbReference type="PROSITE" id="PS50405">
    <property type="entry name" value="GST_CTER"/>
    <property type="match status" value="1"/>
</dbReference>
<dbReference type="PROSITE" id="PS50404">
    <property type="entry name" value="GST_NTER"/>
    <property type="match status" value="1"/>
</dbReference>
<proteinExistence type="evidence at transcript level"/>
<sequence>MAVLLRTTTSATTATSGGSSSATALLATTFRRGGRRLLLLPATRGSAPRRAALLTARASAEPLEVCAKASLTVPDRLGDCPFTQRVLLTIEEKHLPYDIKLVDLANKPDWFLKISPEGKVPIVKLEEQWVADSDVITQAIEEKYPEPSLATPPEKASVGSKIFSTFIGFLKSKDPNDGTEQALLSELTSFDSYLKDNGPFINGETISAADLSLAPKLYHMEIALGHYKNWSVPDSLSHVKKYMKTIFSMDSFVKTIALQEDVIAGWRPKVMG</sequence>
<keyword id="KW-0150">Chloroplast</keyword>
<keyword id="KW-0216">Detoxification</keyword>
<keyword id="KW-0560">Oxidoreductase</keyword>
<keyword id="KW-0934">Plastid</keyword>
<keyword id="KW-1185">Reference proteome</keyword>
<keyword id="KW-0346">Stress response</keyword>
<keyword id="KW-0808">Transferase</keyword>
<keyword id="KW-0809">Transit peptide</keyword>
<name>DHAR2_ORYSJ</name>
<feature type="transit peptide" description="Chloroplast" evidence="3">
    <location>
        <begin position="1"/>
        <end position="57"/>
    </location>
</feature>
<feature type="chain" id="PRO_0000441987" description="Probable glutathione S-transferase DHAR2, chloroplastic">
    <location>
        <begin position="58"/>
        <end position="272"/>
    </location>
</feature>
<feature type="domain" description="GST N-terminal" evidence="4">
    <location>
        <begin position="70"/>
        <end position="148"/>
    </location>
</feature>
<feature type="domain" description="GST C-terminal" evidence="5">
    <location>
        <begin position="126"/>
        <end position="272"/>
    </location>
</feature>
<feature type="active site" description="Nucleophile" evidence="1">
    <location>
        <position position="80"/>
    </location>
</feature>
<feature type="binding site" evidence="1">
    <location>
        <position position="68"/>
    </location>
    <ligand>
        <name>glutathione</name>
        <dbReference type="ChEBI" id="CHEBI:57925"/>
    </ligand>
</feature>
<feature type="binding site" evidence="1">
    <location>
        <position position="68"/>
    </location>
    <ligand>
        <name>L-ascorbate</name>
        <dbReference type="ChEBI" id="CHEBI:38290"/>
    </ligand>
</feature>
<feature type="binding site" evidence="1">
    <location>
        <position position="79"/>
    </location>
    <ligand>
        <name>glutathione</name>
        <dbReference type="ChEBI" id="CHEBI:57925"/>
    </ligand>
</feature>
<feature type="binding site" evidence="1">
    <location>
        <position position="79"/>
    </location>
    <ligand>
        <name>L-ascorbate</name>
        <dbReference type="ChEBI" id="CHEBI:38290"/>
    </ligand>
</feature>
<feature type="binding site" evidence="2">
    <location>
        <position position="107"/>
    </location>
    <ligand>
        <name>glutathione</name>
        <dbReference type="ChEBI" id="CHEBI:57925"/>
    </ligand>
</feature>
<feature type="binding site" evidence="2">
    <location>
        <position position="120"/>
    </location>
    <ligand>
        <name>glutathione</name>
        <dbReference type="ChEBI" id="CHEBI:57925"/>
    </ligand>
</feature>
<feature type="binding site" evidence="2">
    <location>
        <position position="133"/>
    </location>
    <ligand>
        <name>glutathione</name>
        <dbReference type="ChEBI" id="CHEBI:57925"/>
    </ligand>
</feature>
<feature type="binding site" evidence="1">
    <location>
        <position position="219"/>
    </location>
    <ligand>
        <name>glutathione</name>
        <dbReference type="ChEBI" id="CHEBI:57925"/>
    </ligand>
</feature>
<feature type="binding site" evidence="1">
    <location>
        <position position="266"/>
    </location>
    <ligand>
        <name>glutathione</name>
        <dbReference type="ChEBI" id="CHEBI:57925"/>
    </ligand>
</feature>
<feature type="binding site" evidence="1">
    <location>
        <position position="269"/>
    </location>
    <ligand>
        <name>L-ascorbate</name>
        <dbReference type="ChEBI" id="CHEBI:38290"/>
    </ligand>
</feature>
<feature type="sequence conflict" description="In Ref. 4; EEE65386." evidence="8" ref="4">
    <original>G</original>
    <variation>C</variation>
    <location>
        <position position="17"/>
    </location>
</feature>
<feature type="sequence conflict" description="In Ref. 4; EEE65386." evidence="8" ref="4">
    <original>T</original>
    <variation>K</variation>
    <location>
        <position position="43"/>
    </location>
</feature>